<organism>
    <name type="scientific">Yarrowia lipolytica (strain CLIB 122 / E 150)</name>
    <name type="common">Yeast</name>
    <name type="synonym">Candida lipolytica</name>
    <dbReference type="NCBI Taxonomy" id="284591"/>
    <lineage>
        <taxon>Eukaryota</taxon>
        <taxon>Fungi</taxon>
        <taxon>Dikarya</taxon>
        <taxon>Ascomycota</taxon>
        <taxon>Saccharomycotina</taxon>
        <taxon>Dipodascomycetes</taxon>
        <taxon>Dipodascales</taxon>
        <taxon>Dipodascales incertae sedis</taxon>
        <taxon>Yarrowia</taxon>
    </lineage>
</organism>
<dbReference type="EMBL" id="CR382132">
    <property type="protein sequence ID" value="CAG78360.1"/>
    <property type="molecule type" value="Genomic_DNA"/>
</dbReference>
<dbReference type="RefSeq" id="XP_505551.1">
    <property type="nucleotide sequence ID" value="XM_505551.1"/>
</dbReference>
<dbReference type="SMR" id="Q6C1B1"/>
<dbReference type="FunCoup" id="Q6C1B1">
    <property type="interactions" value="263"/>
</dbReference>
<dbReference type="STRING" id="284591.Q6C1B1"/>
<dbReference type="EnsemblFungi" id="CAG78360">
    <property type="protein sequence ID" value="CAG78360"/>
    <property type="gene ID" value="YALI0_F17776g"/>
</dbReference>
<dbReference type="KEGG" id="yli:2908644"/>
<dbReference type="VEuPathDB" id="FungiDB:YALI0_F17776g"/>
<dbReference type="HOGENOM" id="CLU_013428_0_0_1"/>
<dbReference type="InParanoid" id="Q6C1B1"/>
<dbReference type="OMA" id="FDTTWLG"/>
<dbReference type="OrthoDB" id="953at4891"/>
<dbReference type="Proteomes" id="UP000001300">
    <property type="component" value="Chromosome F"/>
</dbReference>
<dbReference type="GO" id="GO:0016592">
    <property type="term" value="C:mediator complex"/>
    <property type="evidence" value="ECO:0000318"/>
    <property type="project" value="GO_Central"/>
</dbReference>
<dbReference type="GO" id="GO:0045893">
    <property type="term" value="P:positive regulation of DNA-templated transcription"/>
    <property type="evidence" value="ECO:0000318"/>
    <property type="project" value="GO_Central"/>
</dbReference>
<dbReference type="InterPro" id="IPR048338">
    <property type="entry name" value="Mediator_Med16"/>
</dbReference>
<dbReference type="InterPro" id="IPR048339">
    <property type="entry name" value="Mediator_Med16_C"/>
</dbReference>
<dbReference type="InterPro" id="IPR021665">
    <property type="entry name" value="Mediator_Med16_N"/>
</dbReference>
<dbReference type="PANTHER" id="PTHR13224:SF6">
    <property type="entry name" value="MEDIATOR OF RNA POLYMERASE II TRANSCRIPTION SUBUNIT 16"/>
    <property type="match status" value="1"/>
</dbReference>
<dbReference type="PANTHER" id="PTHR13224">
    <property type="entry name" value="THYROID HORMONE RECEPTOR-ASSOCIATED PROTEIN-RELATED"/>
    <property type="match status" value="1"/>
</dbReference>
<dbReference type="Pfam" id="PF20719">
    <property type="entry name" value="Med16_C"/>
    <property type="match status" value="1"/>
</dbReference>
<dbReference type="Pfam" id="PF11635">
    <property type="entry name" value="Med16_N"/>
    <property type="match status" value="1"/>
</dbReference>
<proteinExistence type="inferred from homology"/>
<accession>Q6C1B1</accession>
<name>MED16_YARLI</name>
<comment type="function">
    <text evidence="1">Component of the Mediator complex, a coactivator involved in the regulated transcription of nearly all RNA polymerase II-dependent genes. Mediator functions as a bridge to convey information from gene-specific regulatory proteins to the basal RNA polymerase II transcription machinery. Mediator is recruited to promoters by direct interactions with regulatory proteins and serves as a scaffold for the assembly of a functional preinitiation complex with RNA polymerase II and the general transcription factors (By similarity).</text>
</comment>
<comment type="subunit">
    <text evidence="1">Component of the Mediator complex.</text>
</comment>
<comment type="subcellular location">
    <subcellularLocation>
        <location evidence="2">Nucleus</location>
    </subcellularLocation>
</comment>
<comment type="similarity">
    <text evidence="2">Belongs to the Mediator complex subunit 16 family.</text>
</comment>
<keyword id="KW-0010">Activator</keyword>
<keyword id="KW-0539">Nucleus</keyword>
<keyword id="KW-1185">Reference proteome</keyword>
<keyword id="KW-0804">Transcription</keyword>
<keyword id="KW-0805">Transcription regulation</keyword>
<sequence>MYQYAPSHNLDHIEWNHAHLIYPPNLAIPTSPVNPPATQLNQPVQMTIDFDSIIEPKLGARESISWNRNGIIASIGDEGVETNLLVCTDGQDWVLTKPTLYAPKSILQPPTTSFVTPHRAFCHVEWSPSGSDLAIIDTLGSLYIYSQYTTLSPITCLRKPPSEELTTPIDLNAIVGFTWVAPEKPVILTNPGLKAGGNEKSKQKLSDVKDFPTGQTSQLLGYSGISVTYGVSQGLHLGPRIPQGFGACIGVTRSQVLKLWTQNGPSQPYNLVKLSLNQLHSDDIISHASFAGTKDHKMLLACYSPAGAIYLYRIEVEWSKEEEPKLRATRLLKETLMPQSGAPARLTDLKLFSIRSNQVSSETEAEMVCVFTDTKGATTNRYELQSHTPDLNSTFYSLGTNDSSASSTTTHKTHIISLVETTTSNKIVNIGSQVYDSIFFAAHEDGILNFRYRGNVSSSTKGTPFNMFSDAGYAFTPLPKGSDRPDYICVSPTCASYVYKTKDGLKLRIIDNKIPDADLTVAQMVDSAFVLSLRHSVSCISAVCNDDVMMVMRREIQRVSKLAPALETQFPLLLLAESHKAINFSLDLKKDHQMDKIMINPSLQRLLTMQTVIGTQHGWTRNVTSRLSWCFLNLRLVSFSLTFTLRAIGQQKPGVAPNHAMRIHYLMSLSGLKRWCLDFAAYLCQELLAASNEGPSYFQKQHVALPMVMARSSRMLLMYSWRGIRSLDTILMQKPGTETQEAGLASQRQRELSHFTPISMTFFEQLFNVIDSHTKQVAENVEDRLGLEQQLLFQGMIPQQFLPLAKRCVDEFDKFRKTNDLSPLYFYNVSWLGLDEHYDGRPAPTPAMAPYRNVTSTGLKIDCLRKFIIERQEGSILRVCQRCAGTSVFVDSSDGKQFTGTHWTFAFQRNCWCGGMWIPESLGV</sequence>
<evidence type="ECO:0000250" key="1"/>
<evidence type="ECO:0000305" key="2"/>
<feature type="chain" id="PRO_0000307632" description="Mediator of RNA polymerase II transcription subunit 16">
    <location>
        <begin position="1"/>
        <end position="924"/>
    </location>
</feature>
<protein>
    <recommendedName>
        <fullName>Mediator of RNA polymerase II transcription subunit 16</fullName>
    </recommendedName>
    <alternativeName>
        <fullName>Mediator complex subunit 16</fullName>
    </alternativeName>
</protein>
<reference key="1">
    <citation type="journal article" date="2004" name="Nature">
        <title>Genome evolution in yeasts.</title>
        <authorList>
            <person name="Dujon B."/>
            <person name="Sherman D."/>
            <person name="Fischer G."/>
            <person name="Durrens P."/>
            <person name="Casaregola S."/>
            <person name="Lafontaine I."/>
            <person name="de Montigny J."/>
            <person name="Marck C."/>
            <person name="Neuveglise C."/>
            <person name="Talla E."/>
            <person name="Goffard N."/>
            <person name="Frangeul L."/>
            <person name="Aigle M."/>
            <person name="Anthouard V."/>
            <person name="Babour A."/>
            <person name="Barbe V."/>
            <person name="Barnay S."/>
            <person name="Blanchin S."/>
            <person name="Beckerich J.-M."/>
            <person name="Beyne E."/>
            <person name="Bleykasten C."/>
            <person name="Boisrame A."/>
            <person name="Boyer J."/>
            <person name="Cattolico L."/>
            <person name="Confanioleri F."/>
            <person name="de Daruvar A."/>
            <person name="Despons L."/>
            <person name="Fabre E."/>
            <person name="Fairhead C."/>
            <person name="Ferry-Dumazet H."/>
            <person name="Groppi A."/>
            <person name="Hantraye F."/>
            <person name="Hennequin C."/>
            <person name="Jauniaux N."/>
            <person name="Joyet P."/>
            <person name="Kachouri R."/>
            <person name="Kerrest A."/>
            <person name="Koszul R."/>
            <person name="Lemaire M."/>
            <person name="Lesur I."/>
            <person name="Ma L."/>
            <person name="Muller H."/>
            <person name="Nicaud J.-M."/>
            <person name="Nikolski M."/>
            <person name="Oztas S."/>
            <person name="Ozier-Kalogeropoulos O."/>
            <person name="Pellenz S."/>
            <person name="Potier S."/>
            <person name="Richard G.-F."/>
            <person name="Straub M.-L."/>
            <person name="Suleau A."/>
            <person name="Swennen D."/>
            <person name="Tekaia F."/>
            <person name="Wesolowski-Louvel M."/>
            <person name="Westhof E."/>
            <person name="Wirth B."/>
            <person name="Zeniou-Meyer M."/>
            <person name="Zivanovic Y."/>
            <person name="Bolotin-Fukuhara M."/>
            <person name="Thierry A."/>
            <person name="Bouchier C."/>
            <person name="Caudron B."/>
            <person name="Scarpelli C."/>
            <person name="Gaillardin C."/>
            <person name="Weissenbach J."/>
            <person name="Wincker P."/>
            <person name="Souciet J.-L."/>
        </authorList>
    </citation>
    <scope>NUCLEOTIDE SEQUENCE [LARGE SCALE GENOMIC DNA]</scope>
    <source>
        <strain>CLIB 122 / E 150</strain>
    </source>
</reference>
<gene>
    <name type="primary">SIN4</name>
    <name type="synonym">MED16</name>
    <name type="ordered locus">YALI0F17776g</name>
</gene>